<proteinExistence type="inferred from homology"/>
<feature type="chain" id="PRO_1000056241" description="Demethylmenaquinone methyltransferase">
    <location>
        <begin position="1"/>
        <end position="229"/>
    </location>
</feature>
<feature type="binding site" evidence="1">
    <location>
        <position position="57"/>
    </location>
    <ligand>
        <name>S-adenosyl-L-methionine</name>
        <dbReference type="ChEBI" id="CHEBI:59789"/>
    </ligand>
</feature>
<feature type="binding site" evidence="1">
    <location>
        <position position="77"/>
    </location>
    <ligand>
        <name>S-adenosyl-L-methionine</name>
        <dbReference type="ChEBI" id="CHEBI:59789"/>
    </ligand>
</feature>
<feature type="binding site" evidence="1">
    <location>
        <begin position="101"/>
        <end position="102"/>
    </location>
    <ligand>
        <name>S-adenosyl-L-methionine</name>
        <dbReference type="ChEBI" id="CHEBI:59789"/>
    </ligand>
</feature>
<evidence type="ECO:0000255" key="1">
    <source>
        <dbReference type="HAMAP-Rule" id="MF_01813"/>
    </source>
</evidence>
<gene>
    <name evidence="1" type="primary">menG</name>
    <name type="ordered locus">CTA_0468</name>
</gene>
<dbReference type="EC" id="2.1.1.163" evidence="1"/>
<dbReference type="EMBL" id="CP000051">
    <property type="protein sequence ID" value="AAX50700.1"/>
    <property type="molecule type" value="Genomic_DNA"/>
</dbReference>
<dbReference type="SMR" id="Q3KLS2"/>
<dbReference type="KEGG" id="cta:CTA_0468"/>
<dbReference type="HOGENOM" id="CLU_037990_0_0_0"/>
<dbReference type="UniPathway" id="UPA00079">
    <property type="reaction ID" value="UER00169"/>
</dbReference>
<dbReference type="Proteomes" id="UP000002532">
    <property type="component" value="Chromosome"/>
</dbReference>
<dbReference type="GO" id="GO:0043770">
    <property type="term" value="F:demethylmenaquinone methyltransferase activity"/>
    <property type="evidence" value="ECO:0007669"/>
    <property type="project" value="UniProtKB-UniRule"/>
</dbReference>
<dbReference type="GO" id="GO:0009234">
    <property type="term" value="P:menaquinone biosynthetic process"/>
    <property type="evidence" value="ECO:0007669"/>
    <property type="project" value="UniProtKB-UniRule"/>
</dbReference>
<dbReference type="GO" id="GO:0032259">
    <property type="term" value="P:methylation"/>
    <property type="evidence" value="ECO:0007669"/>
    <property type="project" value="UniProtKB-KW"/>
</dbReference>
<dbReference type="CDD" id="cd02440">
    <property type="entry name" value="AdoMet_MTases"/>
    <property type="match status" value="1"/>
</dbReference>
<dbReference type="Gene3D" id="3.40.50.150">
    <property type="entry name" value="Vaccinia Virus protein VP39"/>
    <property type="match status" value="1"/>
</dbReference>
<dbReference type="HAMAP" id="MF_01813">
    <property type="entry name" value="MenG_UbiE_methyltr"/>
    <property type="match status" value="1"/>
</dbReference>
<dbReference type="InterPro" id="IPR029063">
    <property type="entry name" value="SAM-dependent_MTases_sf"/>
</dbReference>
<dbReference type="InterPro" id="IPR004033">
    <property type="entry name" value="UbiE/COQ5_MeTrFase"/>
</dbReference>
<dbReference type="InterPro" id="IPR023576">
    <property type="entry name" value="UbiE/COQ5_MeTrFase_CS"/>
</dbReference>
<dbReference type="NCBIfam" id="TIGR01934">
    <property type="entry name" value="MenG_MenH_UbiE"/>
    <property type="match status" value="1"/>
</dbReference>
<dbReference type="NCBIfam" id="NF001244">
    <property type="entry name" value="PRK00216.1-5"/>
    <property type="match status" value="1"/>
</dbReference>
<dbReference type="PANTHER" id="PTHR43591:SF24">
    <property type="entry name" value="2-METHOXY-6-POLYPRENYL-1,4-BENZOQUINOL METHYLASE, MITOCHONDRIAL"/>
    <property type="match status" value="1"/>
</dbReference>
<dbReference type="PANTHER" id="PTHR43591">
    <property type="entry name" value="METHYLTRANSFERASE"/>
    <property type="match status" value="1"/>
</dbReference>
<dbReference type="Pfam" id="PF01209">
    <property type="entry name" value="Ubie_methyltran"/>
    <property type="match status" value="1"/>
</dbReference>
<dbReference type="SUPFAM" id="SSF53335">
    <property type="entry name" value="S-adenosyl-L-methionine-dependent methyltransferases"/>
    <property type="match status" value="1"/>
</dbReference>
<dbReference type="PROSITE" id="PS51608">
    <property type="entry name" value="SAM_MT_UBIE"/>
    <property type="match status" value="1"/>
</dbReference>
<dbReference type="PROSITE" id="PS01183">
    <property type="entry name" value="UBIE_1"/>
    <property type="match status" value="1"/>
</dbReference>
<dbReference type="PROSITE" id="PS01184">
    <property type="entry name" value="UBIE_2"/>
    <property type="match status" value="1"/>
</dbReference>
<reference key="1">
    <citation type="journal article" date="2005" name="Infect. Immun.">
        <title>Comparative genomic analysis of Chlamydia trachomatis oculotropic and genitotropic strains.</title>
        <authorList>
            <person name="Carlson J.H."/>
            <person name="Porcella S.F."/>
            <person name="McClarty G."/>
            <person name="Caldwell H.D."/>
        </authorList>
    </citation>
    <scope>NUCLEOTIDE SEQUENCE [LARGE SCALE GENOMIC DNA]</scope>
    <source>
        <strain>ATCC VR-571B / DSM 19440 / HAR-13</strain>
    </source>
</reference>
<comment type="function">
    <text evidence="1">Methyltransferase required for the conversion of demethylmenaquinol (DMKH2) to menaquinol (MKH2).</text>
</comment>
<comment type="catalytic activity">
    <reaction evidence="1">
        <text>a 2-demethylmenaquinol + S-adenosyl-L-methionine = a menaquinol + S-adenosyl-L-homocysteine + H(+)</text>
        <dbReference type="Rhea" id="RHEA:42640"/>
        <dbReference type="Rhea" id="RHEA-COMP:9539"/>
        <dbReference type="Rhea" id="RHEA-COMP:9563"/>
        <dbReference type="ChEBI" id="CHEBI:15378"/>
        <dbReference type="ChEBI" id="CHEBI:18151"/>
        <dbReference type="ChEBI" id="CHEBI:55437"/>
        <dbReference type="ChEBI" id="CHEBI:57856"/>
        <dbReference type="ChEBI" id="CHEBI:59789"/>
        <dbReference type="EC" id="2.1.1.163"/>
    </reaction>
</comment>
<comment type="pathway">
    <text evidence="1">Quinol/quinone metabolism; menaquinone biosynthesis; menaquinol from 1,4-dihydroxy-2-naphthoate: step 2/2.</text>
</comment>
<comment type="similarity">
    <text evidence="1">Belongs to the class I-like SAM-binding methyltransferase superfamily. MenG/UbiE family.</text>
</comment>
<organism>
    <name type="scientific">Chlamydia trachomatis serovar A (strain ATCC VR-571B / DSM 19440 / HAR-13)</name>
    <dbReference type="NCBI Taxonomy" id="315277"/>
    <lineage>
        <taxon>Bacteria</taxon>
        <taxon>Pseudomonadati</taxon>
        <taxon>Chlamydiota</taxon>
        <taxon>Chlamydiia</taxon>
        <taxon>Chlamydiales</taxon>
        <taxon>Chlamydiaceae</taxon>
        <taxon>Chlamydia/Chlamydophila group</taxon>
        <taxon>Chlamydia</taxon>
    </lineage>
</organism>
<accession>Q3KLS2</accession>
<protein>
    <recommendedName>
        <fullName evidence="1">Demethylmenaquinone methyltransferase</fullName>
        <ecNumber evidence="1">2.1.1.163</ecNumber>
    </recommendedName>
</protein>
<name>MENG_CHLTA</name>
<sequence length="229" mass="25843">MTDFHNKPNIQIMFDSLAPTYDKINGILSLGLHIAWNNALVSLLGETNHLLDLCAGTGRVALSYVQNYPRASATLVDFSTKMLENVQKRHPSAPFSYITSDVTHLPLPDNTFRLASMAYGLRNLSYPLEALREVYRVLQPGGHLGILELTRPATYNPVYLLHKLYLNLVVPSVGRFYSGNSYAYSYLKESIRDLPRDAALEAIFHAAHLRPIRKRKLLFGTATIWILEK</sequence>
<keyword id="KW-0474">Menaquinone biosynthesis</keyword>
<keyword id="KW-0489">Methyltransferase</keyword>
<keyword id="KW-0949">S-adenosyl-L-methionine</keyword>
<keyword id="KW-0808">Transferase</keyword>